<dbReference type="EC" id="3.4.21.-"/>
<dbReference type="EMBL" id="U21917">
    <property type="protein sequence ID" value="AAA73920.1"/>
    <property type="status" value="ALT_FRAME"/>
    <property type="molecule type" value="mRNA"/>
</dbReference>
<dbReference type="EMBL" id="AAAB01008960">
    <property type="protein sequence ID" value="EAA44223.1"/>
    <property type="molecule type" value="Genomic_DNA"/>
</dbReference>
<dbReference type="RefSeq" id="XP_316450.1">
    <property type="nucleotide sequence ID" value="XM_316450.1"/>
</dbReference>
<dbReference type="SMR" id="Q17004"/>
<dbReference type="STRING" id="7165.Q17004"/>
<dbReference type="PaxDb" id="7165-AGAP006416-PA"/>
<dbReference type="EnsemblMetazoa" id="AGAP006416-RA">
    <property type="protein sequence ID" value="AGAP006416-PA"/>
    <property type="gene ID" value="AGAP006416"/>
</dbReference>
<dbReference type="GeneID" id="1277027"/>
<dbReference type="KEGG" id="aga:1277027"/>
<dbReference type="VEuPathDB" id="VectorBase:AGAMI1_001798"/>
<dbReference type="VEuPathDB" id="VectorBase:AGAP006416"/>
<dbReference type="eggNOG" id="KOG3627">
    <property type="taxonomic scope" value="Eukaryota"/>
</dbReference>
<dbReference type="HOGENOM" id="CLU_006842_7_4_1"/>
<dbReference type="InParanoid" id="Q17004"/>
<dbReference type="OMA" id="VLPHERY"/>
<dbReference type="PhylomeDB" id="Q17004"/>
<dbReference type="Proteomes" id="UP000007062">
    <property type="component" value="Chromosome 2L"/>
</dbReference>
<dbReference type="GO" id="GO:0005615">
    <property type="term" value="C:extracellular space"/>
    <property type="evidence" value="ECO:0000318"/>
    <property type="project" value="GO_Central"/>
</dbReference>
<dbReference type="GO" id="GO:0004252">
    <property type="term" value="F:serine-type endopeptidase activity"/>
    <property type="evidence" value="ECO:0000318"/>
    <property type="project" value="GO_Central"/>
</dbReference>
<dbReference type="GO" id="GO:0006508">
    <property type="term" value="P:proteolysis"/>
    <property type="evidence" value="ECO:0000318"/>
    <property type="project" value="GO_Central"/>
</dbReference>
<dbReference type="CDD" id="cd00190">
    <property type="entry name" value="Tryp_SPc"/>
    <property type="match status" value="1"/>
</dbReference>
<dbReference type="FunFam" id="2.40.10.10:FF:000034">
    <property type="entry name" value="Eupolytin"/>
    <property type="match status" value="1"/>
</dbReference>
<dbReference type="Gene3D" id="2.40.10.10">
    <property type="entry name" value="Trypsin-like serine proteases"/>
    <property type="match status" value="1"/>
</dbReference>
<dbReference type="InterPro" id="IPR050430">
    <property type="entry name" value="Peptidase_S1"/>
</dbReference>
<dbReference type="InterPro" id="IPR009003">
    <property type="entry name" value="Peptidase_S1_PA"/>
</dbReference>
<dbReference type="InterPro" id="IPR043504">
    <property type="entry name" value="Peptidase_S1_PA_chymotrypsin"/>
</dbReference>
<dbReference type="InterPro" id="IPR001314">
    <property type="entry name" value="Peptidase_S1A"/>
</dbReference>
<dbReference type="InterPro" id="IPR001254">
    <property type="entry name" value="Trypsin_dom"/>
</dbReference>
<dbReference type="InterPro" id="IPR018114">
    <property type="entry name" value="TRYPSIN_HIS"/>
</dbReference>
<dbReference type="PANTHER" id="PTHR24276:SF91">
    <property type="entry name" value="AT26814P-RELATED"/>
    <property type="match status" value="1"/>
</dbReference>
<dbReference type="PANTHER" id="PTHR24276">
    <property type="entry name" value="POLYSERASE-RELATED"/>
    <property type="match status" value="1"/>
</dbReference>
<dbReference type="Pfam" id="PF00089">
    <property type="entry name" value="Trypsin"/>
    <property type="match status" value="1"/>
</dbReference>
<dbReference type="PRINTS" id="PR00722">
    <property type="entry name" value="CHYMOTRYPSIN"/>
</dbReference>
<dbReference type="SMART" id="SM00020">
    <property type="entry name" value="Tryp_SPc"/>
    <property type="match status" value="1"/>
</dbReference>
<dbReference type="SUPFAM" id="SSF50494">
    <property type="entry name" value="Trypsin-like serine proteases"/>
    <property type="match status" value="1"/>
</dbReference>
<dbReference type="PROSITE" id="PS50240">
    <property type="entry name" value="TRYPSIN_DOM"/>
    <property type="match status" value="1"/>
</dbReference>
<dbReference type="PROSITE" id="PS00134">
    <property type="entry name" value="TRYPSIN_HIS"/>
    <property type="match status" value="1"/>
</dbReference>
<reference key="1">
    <citation type="journal article" date="1997" name="Insect Mol. Biol.">
        <title>Cloning and characterization of a serine protease from the human malaria vector, Anopheles gambiae.</title>
        <authorList>
            <person name="Han Y.S."/>
            <person name="Salazar C.E."/>
            <person name="Reese-Stardy S.R."/>
            <person name="Cornel A."/>
            <person name="Gorman M.J."/>
            <person name="Collins F.H."/>
            <person name="Paskewitz S.M."/>
        </authorList>
    </citation>
    <scope>NUCLEOTIDE SEQUENCE [MRNA]</scope>
    <scope>TISSUE SPECIFICITY</scope>
    <scope>DEVELOPMENTAL STAGE</scope>
    <scope>INDUCTION</scope>
    <source>
        <strain>G3</strain>
    </source>
</reference>
<reference key="2">
    <citation type="journal article" date="2002" name="Science">
        <title>The genome sequence of the malaria mosquito Anopheles gambiae.</title>
        <authorList>
            <person name="Holt R.A."/>
            <person name="Subramanian G.M."/>
            <person name="Halpern A."/>
            <person name="Sutton G.G."/>
            <person name="Charlab R."/>
            <person name="Nusskern D.R."/>
            <person name="Wincker P."/>
            <person name="Clark A.G."/>
            <person name="Ribeiro J.M.C."/>
            <person name="Wides R."/>
            <person name="Salzberg S.L."/>
            <person name="Loftus B.J."/>
            <person name="Yandell M.D."/>
            <person name="Majoros W.H."/>
            <person name="Rusch D.B."/>
            <person name="Lai Z."/>
            <person name="Kraft C.L."/>
            <person name="Abril J.F."/>
            <person name="Anthouard V."/>
            <person name="Arensburger P."/>
            <person name="Atkinson P.W."/>
            <person name="Baden H."/>
            <person name="de Berardinis V."/>
            <person name="Baldwin D."/>
            <person name="Benes V."/>
            <person name="Biedler J."/>
            <person name="Blass C."/>
            <person name="Bolanos R."/>
            <person name="Boscus D."/>
            <person name="Barnstead M."/>
            <person name="Cai S."/>
            <person name="Center A."/>
            <person name="Chaturverdi K."/>
            <person name="Christophides G.K."/>
            <person name="Chrystal M.A.M."/>
            <person name="Clamp M."/>
            <person name="Cravchik A."/>
            <person name="Curwen V."/>
            <person name="Dana A."/>
            <person name="Delcher A."/>
            <person name="Dew I."/>
            <person name="Evans C.A."/>
            <person name="Flanigan M."/>
            <person name="Grundschober-Freimoser A."/>
            <person name="Friedli L."/>
            <person name="Gu Z."/>
            <person name="Guan P."/>
            <person name="Guigo R."/>
            <person name="Hillenmeyer M.E."/>
            <person name="Hladun S.L."/>
            <person name="Hogan J.R."/>
            <person name="Hong Y.S."/>
            <person name="Hoover J."/>
            <person name="Jaillon O."/>
            <person name="Ke Z."/>
            <person name="Kodira C.D."/>
            <person name="Kokoza E."/>
            <person name="Koutsos A."/>
            <person name="Letunic I."/>
            <person name="Levitsky A.A."/>
            <person name="Liang Y."/>
            <person name="Lin J.-J."/>
            <person name="Lobo N.F."/>
            <person name="Lopez J.R."/>
            <person name="Malek J.A."/>
            <person name="McIntosh T.C."/>
            <person name="Meister S."/>
            <person name="Miller J.R."/>
            <person name="Mobarry C."/>
            <person name="Mongin E."/>
            <person name="Murphy S.D."/>
            <person name="O'Brochta D.A."/>
            <person name="Pfannkoch C."/>
            <person name="Qi R."/>
            <person name="Regier M.A."/>
            <person name="Remington K."/>
            <person name="Shao H."/>
            <person name="Sharakhova M.V."/>
            <person name="Sitter C.D."/>
            <person name="Shetty J."/>
            <person name="Smith T.J."/>
            <person name="Strong R."/>
            <person name="Sun J."/>
            <person name="Thomasova D."/>
            <person name="Ton L.Q."/>
            <person name="Topalis P."/>
            <person name="Tu Z.J."/>
            <person name="Unger M.F."/>
            <person name="Walenz B."/>
            <person name="Wang A.H."/>
            <person name="Wang J."/>
            <person name="Wang M."/>
            <person name="Wang X."/>
            <person name="Woodford K.J."/>
            <person name="Wortman J.R."/>
            <person name="Wu M."/>
            <person name="Yao A."/>
            <person name="Zdobnov E.M."/>
            <person name="Zhang H."/>
            <person name="Zhao Q."/>
            <person name="Zhao S."/>
            <person name="Zhu S.C."/>
            <person name="Zhimulev I."/>
            <person name="Coluzzi M."/>
            <person name="della Torre A."/>
            <person name="Roth C.W."/>
            <person name="Louis C."/>
            <person name="Kalush F."/>
            <person name="Mural R.J."/>
            <person name="Myers E.W."/>
            <person name="Adams M.D."/>
            <person name="Smith H.O."/>
            <person name="Broder S."/>
            <person name="Gardner M.J."/>
            <person name="Fraser C.M."/>
            <person name="Birney E."/>
            <person name="Bork P."/>
            <person name="Brey P.T."/>
            <person name="Venter J.C."/>
            <person name="Weissenbach J."/>
            <person name="Kafatos F.C."/>
            <person name="Collins F.H."/>
            <person name="Hoffman S.L."/>
        </authorList>
    </citation>
    <scope>NUCLEOTIDE SEQUENCE [LARGE SCALE GENOMIC DNA]</scope>
    <source>
        <strain>PEST</strain>
    </source>
</reference>
<evidence type="ECO:0000250" key="1"/>
<evidence type="ECO:0000255" key="2"/>
<evidence type="ECO:0000255" key="3">
    <source>
        <dbReference type="PROSITE-ProRule" id="PRU00274"/>
    </source>
</evidence>
<evidence type="ECO:0000269" key="4">
    <source>
    </source>
</evidence>
<evidence type="ECO:0000305" key="5"/>
<protein>
    <recommendedName>
        <fullName>Serine protease SP24D</fullName>
        <ecNumber>3.4.21.-</ecNumber>
    </recommendedName>
    <alternativeName>
        <fullName>AgSp24D</fullName>
    </alternativeName>
</protein>
<name>SP24D_ANOGA</name>
<proteinExistence type="evidence at transcript level"/>
<comment type="tissue specificity">
    <text evidence="4">Highest level of adult expression is in the thorax.</text>
</comment>
<comment type="developmental stage">
    <text evidence="4">Low expression levels are seen in larvae and pupae. Expressed at higher levels in adult males than females. Plasmodium-refractory mosquitoes have higher levels of expression than susceptible mosquitoes.</text>
</comment>
<comment type="induction">
    <text evidence="4">Expression levels are not increased after blood feeding or cold shock, septic wounding, bacterial injection, laminarin injection or CM-Sephadex bead injection.</text>
</comment>
<comment type="similarity">
    <text evidence="3">Belongs to the peptidase S1 family.</text>
</comment>
<comment type="sequence caution" evidence="5">
    <conflict type="frameshift">
        <sequence resource="EMBL-CDS" id="AAA73920"/>
    </conflict>
</comment>
<sequence>MTLADRVPLALAALAYLALVSGVRFHLSEQNDVLPGGSQARRPFFQGARIVGGSVASEGQFPHQVALLRGNALTCGGSLIESRWVLTAAHCVYNGALVVPASSIVVVAGSVSLSNGVRRAVARVIPHERYGNFKNDVALLQLQLSLPSSAYIRPIALRTTSVPAGSEVVISGWGRMYQGGPVSNMLRYNRATVVADQQCRMATGISTGLICFTSPVNNGACNGDSGGPAILNNQLVGVANFIINYCGSASPDGYARVSDFVTWIQTTMRRY</sequence>
<organism>
    <name type="scientific">Anopheles gambiae</name>
    <name type="common">African malaria mosquito</name>
    <dbReference type="NCBI Taxonomy" id="7165"/>
    <lineage>
        <taxon>Eukaryota</taxon>
        <taxon>Metazoa</taxon>
        <taxon>Ecdysozoa</taxon>
        <taxon>Arthropoda</taxon>
        <taxon>Hexapoda</taxon>
        <taxon>Insecta</taxon>
        <taxon>Pterygota</taxon>
        <taxon>Neoptera</taxon>
        <taxon>Endopterygota</taxon>
        <taxon>Diptera</taxon>
        <taxon>Nematocera</taxon>
        <taxon>Culicoidea</taxon>
        <taxon>Culicidae</taxon>
        <taxon>Anophelinae</taxon>
        <taxon>Anopheles</taxon>
    </lineage>
</organism>
<keyword id="KW-1015">Disulfide bond</keyword>
<keyword id="KW-0378">Hydrolase</keyword>
<keyword id="KW-0645">Protease</keyword>
<keyword id="KW-1185">Reference proteome</keyword>
<keyword id="KW-0720">Serine protease</keyword>
<keyword id="KW-0732">Signal</keyword>
<keyword id="KW-0865">Zymogen</keyword>
<feature type="signal peptide" evidence="2">
    <location>
        <begin position="1"/>
        <end position="22"/>
    </location>
</feature>
<feature type="propeptide" id="PRO_0000028151" description="Activation peptide" evidence="2">
    <location>
        <begin position="23"/>
        <end position="49"/>
    </location>
</feature>
<feature type="chain" id="PRO_0000028152" description="Serine protease SP24D">
    <location>
        <begin position="50"/>
        <end position="271"/>
    </location>
</feature>
<feature type="domain" description="Peptidase S1" evidence="3">
    <location>
        <begin position="50"/>
        <end position="269"/>
    </location>
</feature>
<feature type="active site" description="Charge relay system" evidence="1">
    <location>
        <position position="90"/>
    </location>
</feature>
<feature type="active site" description="Charge relay system" evidence="1">
    <location>
        <position position="136"/>
    </location>
</feature>
<feature type="active site" description="Charge relay system" evidence="1">
    <location>
        <position position="225"/>
    </location>
</feature>
<feature type="disulfide bond" evidence="3">
    <location>
        <begin position="75"/>
        <end position="91"/>
    </location>
</feature>
<feature type="disulfide bond" evidence="3">
    <location>
        <begin position="199"/>
        <end position="211"/>
    </location>
</feature>
<feature type="disulfide bond" evidence="3">
    <location>
        <begin position="221"/>
        <end position="246"/>
    </location>
</feature>
<feature type="sequence conflict" description="In Ref. 1; AAA73920." evidence="5" ref="1">
    <original>P</original>
    <variation>T</variation>
    <location>
        <position position="126"/>
    </location>
</feature>
<feature type="sequence conflict" description="In Ref. 1; AAA73920." evidence="5" ref="1">
    <original>T</original>
    <variation>S</variation>
    <location>
        <position position="160"/>
    </location>
</feature>
<feature type="sequence conflict" description="In Ref. 1; AAA73920." evidence="5" ref="1">
    <original>MA</original>
    <variation>DP</variation>
    <location>
        <begin position="201"/>
        <end position="202"/>
    </location>
</feature>
<feature type="sequence conflict" description="In Ref. 1; AAA73920." evidence="5" ref="1">
    <original>VA</original>
    <variation>RP</variation>
    <location>
        <begin position="238"/>
        <end position="239"/>
    </location>
</feature>
<feature type="sequence conflict" description="In Ref. 1; AAA73920." evidence="5" ref="1">
    <original>R</original>
    <variation>K</variation>
    <location>
        <position position="256"/>
    </location>
</feature>
<accession>Q17004</accession>
<accession>Q7PIA2</accession>
<accession>Q7Q5I5</accession>
<gene>
    <name type="primary">Sp24D</name>
    <name type="ORF">AGAP006416</name>
</gene>